<evidence type="ECO:0000250" key="1">
    <source>
        <dbReference type="UniProtKB" id="O48814"/>
    </source>
</evidence>
<evidence type="ECO:0000255" key="2"/>
<evidence type="ECO:0000255" key="3">
    <source>
        <dbReference type="PROSITE-ProRule" id="PRU00159"/>
    </source>
</evidence>
<evidence type="ECO:0000255" key="4">
    <source>
        <dbReference type="PROSITE-ProRule" id="PRU00806"/>
    </source>
</evidence>
<evidence type="ECO:0000255" key="5">
    <source>
        <dbReference type="PROSITE-ProRule" id="PRU10027"/>
    </source>
</evidence>
<evidence type="ECO:0000305" key="6"/>
<name>CRK30_ARATH</name>
<organism>
    <name type="scientific">Arabidopsis thaliana</name>
    <name type="common">Mouse-ear cress</name>
    <dbReference type="NCBI Taxonomy" id="3702"/>
    <lineage>
        <taxon>Eukaryota</taxon>
        <taxon>Viridiplantae</taxon>
        <taxon>Streptophyta</taxon>
        <taxon>Embryophyta</taxon>
        <taxon>Tracheophyta</taxon>
        <taxon>Spermatophyta</taxon>
        <taxon>Magnoliopsida</taxon>
        <taxon>eudicotyledons</taxon>
        <taxon>Gunneridae</taxon>
        <taxon>Pentapetalae</taxon>
        <taxon>rosids</taxon>
        <taxon>malvids</taxon>
        <taxon>Brassicales</taxon>
        <taxon>Brassicaceae</taxon>
        <taxon>Camelineae</taxon>
        <taxon>Arabidopsis</taxon>
    </lineage>
</organism>
<comment type="catalytic activity">
    <reaction>
        <text>L-seryl-[protein] + ATP = O-phospho-L-seryl-[protein] + ADP + H(+)</text>
        <dbReference type="Rhea" id="RHEA:17989"/>
        <dbReference type="Rhea" id="RHEA-COMP:9863"/>
        <dbReference type="Rhea" id="RHEA-COMP:11604"/>
        <dbReference type="ChEBI" id="CHEBI:15378"/>
        <dbReference type="ChEBI" id="CHEBI:29999"/>
        <dbReference type="ChEBI" id="CHEBI:30616"/>
        <dbReference type="ChEBI" id="CHEBI:83421"/>
        <dbReference type="ChEBI" id="CHEBI:456216"/>
    </reaction>
</comment>
<comment type="catalytic activity">
    <reaction>
        <text>L-threonyl-[protein] + ATP = O-phospho-L-threonyl-[protein] + ADP + H(+)</text>
        <dbReference type="Rhea" id="RHEA:46608"/>
        <dbReference type="Rhea" id="RHEA-COMP:11060"/>
        <dbReference type="Rhea" id="RHEA-COMP:11605"/>
        <dbReference type="ChEBI" id="CHEBI:15378"/>
        <dbReference type="ChEBI" id="CHEBI:30013"/>
        <dbReference type="ChEBI" id="CHEBI:30616"/>
        <dbReference type="ChEBI" id="CHEBI:61977"/>
        <dbReference type="ChEBI" id="CHEBI:456216"/>
    </reaction>
</comment>
<comment type="subcellular location">
    <subcellularLocation>
        <location evidence="6">Membrane</location>
        <topology evidence="6">Single-pass membrane protein</topology>
    </subcellularLocation>
</comment>
<comment type="similarity">
    <text evidence="3">Belongs to the protein kinase superfamily. Ser/Thr protein kinase family. CRK subfamily.</text>
</comment>
<protein>
    <recommendedName>
        <fullName>Putative cysteine-rich receptor-like protein kinase 30</fullName>
        <shortName>Cysteine-rich RLK30</shortName>
        <ecNumber>2.7.11.-</ecNumber>
    </recommendedName>
</protein>
<feature type="signal peptide" evidence="2">
    <location>
        <begin position="1"/>
        <end position="24"/>
    </location>
</feature>
<feature type="chain" id="PRO_0000295077" description="Putative cysteine-rich receptor-like protein kinase 30">
    <location>
        <begin position="25"/>
        <end position="700"/>
    </location>
</feature>
<feature type="topological domain" description="Extracellular" evidence="2">
    <location>
        <begin position="25"/>
        <end position="285"/>
    </location>
</feature>
<feature type="transmembrane region" description="Helical" evidence="2">
    <location>
        <begin position="286"/>
        <end position="306"/>
    </location>
</feature>
<feature type="topological domain" description="Cytoplasmic" evidence="2">
    <location>
        <begin position="307"/>
        <end position="700"/>
    </location>
</feature>
<feature type="domain" description="Gnk2-homologous 1" evidence="4">
    <location>
        <begin position="25"/>
        <end position="129"/>
    </location>
</feature>
<feature type="domain" description="Gnk2-homologous 2" evidence="4">
    <location>
        <begin position="135"/>
        <end position="250"/>
    </location>
</feature>
<feature type="domain" description="Protein kinase" evidence="3">
    <location>
        <begin position="346"/>
        <end position="626"/>
    </location>
</feature>
<feature type="active site" description="Proton acceptor" evidence="3 5">
    <location>
        <position position="474"/>
    </location>
</feature>
<feature type="binding site" evidence="3">
    <location>
        <begin position="352"/>
        <end position="360"/>
    </location>
    <ligand>
        <name>ATP</name>
        <dbReference type="ChEBI" id="CHEBI:30616"/>
    </ligand>
</feature>
<feature type="binding site" evidence="3">
    <location>
        <position position="374"/>
    </location>
    <ligand>
        <name>ATP</name>
        <dbReference type="ChEBI" id="CHEBI:30616"/>
    </ligand>
</feature>
<feature type="modified residue" description="Phosphoserine" evidence="1">
    <location>
        <position position="478"/>
    </location>
</feature>
<feature type="modified residue" description="Phosphothreonine" evidence="1">
    <location>
        <position position="514"/>
    </location>
</feature>
<feature type="modified residue" description="Phosphotyrosine" evidence="1">
    <location>
        <position position="522"/>
    </location>
</feature>
<feature type="glycosylation site" description="N-linked (GlcNAc...) asparagine" evidence="2">
    <location>
        <position position="63"/>
    </location>
</feature>
<feature type="glycosylation site" description="N-linked (GlcNAc...) asparagine" evidence="2">
    <location>
        <position position="105"/>
    </location>
</feature>
<feature type="glycosylation site" description="N-linked (GlcNAc...) asparagine" evidence="2">
    <location>
        <position position="146"/>
    </location>
</feature>
<feature type="glycosylation site" description="N-linked (GlcNAc...) asparagine" evidence="2">
    <location>
        <position position="150"/>
    </location>
</feature>
<feature type="glycosylation site" description="N-linked (GlcNAc...) asparagine" evidence="2">
    <location>
        <position position="191"/>
    </location>
</feature>
<proteinExistence type="inferred from homology"/>
<accession>Q9LDT0</accession>
<keyword id="KW-0067">ATP-binding</keyword>
<keyword id="KW-0325">Glycoprotein</keyword>
<keyword id="KW-0418">Kinase</keyword>
<keyword id="KW-0472">Membrane</keyword>
<keyword id="KW-0547">Nucleotide-binding</keyword>
<keyword id="KW-0597">Phosphoprotein</keyword>
<keyword id="KW-0675">Receptor</keyword>
<keyword id="KW-1185">Reference proteome</keyword>
<keyword id="KW-0677">Repeat</keyword>
<keyword id="KW-0723">Serine/threonine-protein kinase</keyword>
<keyword id="KW-0732">Signal</keyword>
<keyword id="KW-0808">Transferase</keyword>
<keyword id="KW-0812">Transmembrane</keyword>
<keyword id="KW-1133">Transmembrane helix</keyword>
<gene>
    <name type="primary">CRK30</name>
    <name type="ordered locus">At4g11460</name>
    <name type="ORF">F25E4.80</name>
</gene>
<reference key="1">
    <citation type="journal article" date="1999" name="Nature">
        <title>Sequence and analysis of chromosome 4 of the plant Arabidopsis thaliana.</title>
        <authorList>
            <person name="Mayer K.F.X."/>
            <person name="Schueller C."/>
            <person name="Wambutt R."/>
            <person name="Murphy G."/>
            <person name="Volckaert G."/>
            <person name="Pohl T."/>
            <person name="Duesterhoeft A."/>
            <person name="Stiekema W."/>
            <person name="Entian K.-D."/>
            <person name="Terryn N."/>
            <person name="Harris B."/>
            <person name="Ansorge W."/>
            <person name="Brandt P."/>
            <person name="Grivell L.A."/>
            <person name="Rieger M."/>
            <person name="Weichselgartner M."/>
            <person name="de Simone V."/>
            <person name="Obermaier B."/>
            <person name="Mache R."/>
            <person name="Mueller M."/>
            <person name="Kreis M."/>
            <person name="Delseny M."/>
            <person name="Puigdomenech P."/>
            <person name="Watson M."/>
            <person name="Schmidtheini T."/>
            <person name="Reichert B."/>
            <person name="Portetelle D."/>
            <person name="Perez-Alonso M."/>
            <person name="Boutry M."/>
            <person name="Bancroft I."/>
            <person name="Vos P."/>
            <person name="Hoheisel J."/>
            <person name="Zimmermann W."/>
            <person name="Wedler H."/>
            <person name="Ridley P."/>
            <person name="Langham S.-A."/>
            <person name="McCullagh B."/>
            <person name="Bilham L."/>
            <person name="Robben J."/>
            <person name="van der Schueren J."/>
            <person name="Grymonprez B."/>
            <person name="Chuang Y.-J."/>
            <person name="Vandenbussche F."/>
            <person name="Braeken M."/>
            <person name="Weltjens I."/>
            <person name="Voet M."/>
            <person name="Bastiaens I."/>
            <person name="Aert R."/>
            <person name="Defoor E."/>
            <person name="Weitzenegger T."/>
            <person name="Bothe G."/>
            <person name="Ramsperger U."/>
            <person name="Hilbert H."/>
            <person name="Braun M."/>
            <person name="Holzer E."/>
            <person name="Brandt A."/>
            <person name="Peters S."/>
            <person name="van Staveren M."/>
            <person name="Dirkse W."/>
            <person name="Mooijman P."/>
            <person name="Klein Lankhorst R."/>
            <person name="Rose M."/>
            <person name="Hauf J."/>
            <person name="Koetter P."/>
            <person name="Berneiser S."/>
            <person name="Hempel S."/>
            <person name="Feldpausch M."/>
            <person name="Lamberth S."/>
            <person name="Van den Daele H."/>
            <person name="De Keyser A."/>
            <person name="Buysshaert C."/>
            <person name="Gielen J."/>
            <person name="Villarroel R."/>
            <person name="De Clercq R."/>
            <person name="van Montagu M."/>
            <person name="Rogers J."/>
            <person name="Cronin A."/>
            <person name="Quail M.A."/>
            <person name="Bray-Allen S."/>
            <person name="Clark L."/>
            <person name="Doggett J."/>
            <person name="Hall S."/>
            <person name="Kay M."/>
            <person name="Lennard N."/>
            <person name="McLay K."/>
            <person name="Mayes R."/>
            <person name="Pettett A."/>
            <person name="Rajandream M.A."/>
            <person name="Lyne M."/>
            <person name="Benes V."/>
            <person name="Rechmann S."/>
            <person name="Borkova D."/>
            <person name="Bloecker H."/>
            <person name="Scharfe M."/>
            <person name="Grimm M."/>
            <person name="Loehnert T.-H."/>
            <person name="Dose S."/>
            <person name="de Haan M."/>
            <person name="Maarse A.C."/>
            <person name="Schaefer M."/>
            <person name="Mueller-Auer S."/>
            <person name="Gabel C."/>
            <person name="Fuchs M."/>
            <person name="Fartmann B."/>
            <person name="Granderath K."/>
            <person name="Dauner D."/>
            <person name="Herzl A."/>
            <person name="Neumann S."/>
            <person name="Argiriou A."/>
            <person name="Vitale D."/>
            <person name="Liguori R."/>
            <person name="Piravandi E."/>
            <person name="Massenet O."/>
            <person name="Quigley F."/>
            <person name="Clabauld G."/>
            <person name="Muendlein A."/>
            <person name="Felber R."/>
            <person name="Schnabl S."/>
            <person name="Hiller R."/>
            <person name="Schmidt W."/>
            <person name="Lecharny A."/>
            <person name="Aubourg S."/>
            <person name="Chefdor F."/>
            <person name="Cooke R."/>
            <person name="Berger C."/>
            <person name="Monfort A."/>
            <person name="Casacuberta E."/>
            <person name="Gibbons T."/>
            <person name="Weber N."/>
            <person name="Vandenbol M."/>
            <person name="Bargues M."/>
            <person name="Terol J."/>
            <person name="Torres A."/>
            <person name="Perez-Perez A."/>
            <person name="Purnelle B."/>
            <person name="Bent E."/>
            <person name="Johnson S."/>
            <person name="Tacon D."/>
            <person name="Jesse T."/>
            <person name="Heijnen L."/>
            <person name="Schwarz S."/>
            <person name="Scholler P."/>
            <person name="Heber S."/>
            <person name="Francs P."/>
            <person name="Bielke C."/>
            <person name="Frishman D."/>
            <person name="Haase D."/>
            <person name="Lemcke K."/>
            <person name="Mewes H.-W."/>
            <person name="Stocker S."/>
            <person name="Zaccaria P."/>
            <person name="Bevan M."/>
            <person name="Wilson R.K."/>
            <person name="de la Bastide M."/>
            <person name="Habermann K."/>
            <person name="Parnell L."/>
            <person name="Dedhia N."/>
            <person name="Gnoj L."/>
            <person name="Schutz K."/>
            <person name="Huang E."/>
            <person name="Spiegel L."/>
            <person name="Sekhon M."/>
            <person name="Murray J."/>
            <person name="Sheet P."/>
            <person name="Cordes M."/>
            <person name="Abu-Threideh J."/>
            <person name="Stoneking T."/>
            <person name="Kalicki J."/>
            <person name="Graves T."/>
            <person name="Harmon G."/>
            <person name="Edwards J."/>
            <person name="Latreille P."/>
            <person name="Courtney L."/>
            <person name="Cloud J."/>
            <person name="Abbott A."/>
            <person name="Scott K."/>
            <person name="Johnson D."/>
            <person name="Minx P."/>
            <person name="Bentley D."/>
            <person name="Fulton B."/>
            <person name="Miller N."/>
            <person name="Greco T."/>
            <person name="Kemp K."/>
            <person name="Kramer J."/>
            <person name="Fulton L."/>
            <person name="Mardis E."/>
            <person name="Dante M."/>
            <person name="Pepin K."/>
            <person name="Hillier L.W."/>
            <person name="Nelson J."/>
            <person name="Spieth J."/>
            <person name="Ryan E."/>
            <person name="Andrews S."/>
            <person name="Geisel C."/>
            <person name="Layman D."/>
            <person name="Du H."/>
            <person name="Ali J."/>
            <person name="Berghoff A."/>
            <person name="Jones K."/>
            <person name="Drone K."/>
            <person name="Cotton M."/>
            <person name="Joshu C."/>
            <person name="Antonoiu B."/>
            <person name="Zidanic M."/>
            <person name="Strong C."/>
            <person name="Sun H."/>
            <person name="Lamar B."/>
            <person name="Yordan C."/>
            <person name="Ma P."/>
            <person name="Zhong J."/>
            <person name="Preston R."/>
            <person name="Vil D."/>
            <person name="Shekher M."/>
            <person name="Matero A."/>
            <person name="Shah R."/>
            <person name="Swaby I.K."/>
            <person name="O'Shaughnessy A."/>
            <person name="Rodriguez M."/>
            <person name="Hoffman J."/>
            <person name="Till S."/>
            <person name="Granat S."/>
            <person name="Shohdy N."/>
            <person name="Hasegawa A."/>
            <person name="Hameed A."/>
            <person name="Lodhi M."/>
            <person name="Johnson A."/>
            <person name="Chen E."/>
            <person name="Marra M.A."/>
            <person name="Martienssen R."/>
            <person name="McCombie W.R."/>
        </authorList>
    </citation>
    <scope>NUCLEOTIDE SEQUENCE [LARGE SCALE GENOMIC DNA]</scope>
    <source>
        <strain>cv. Columbia</strain>
    </source>
</reference>
<reference key="2">
    <citation type="journal article" date="2017" name="Plant J.">
        <title>Araport11: a complete reannotation of the Arabidopsis thaliana reference genome.</title>
        <authorList>
            <person name="Cheng C.Y."/>
            <person name="Krishnakumar V."/>
            <person name="Chan A.P."/>
            <person name="Thibaud-Nissen F."/>
            <person name="Schobel S."/>
            <person name="Town C.D."/>
        </authorList>
    </citation>
    <scope>GENOME REANNOTATION</scope>
    <source>
        <strain>cv. Columbia</strain>
    </source>
</reference>
<reference key="3">
    <citation type="journal article" date="2001" name="Plant Physiol.">
        <title>A superfamily of proteins with novel cysteine-rich repeats.</title>
        <authorList>
            <person name="Chen Z."/>
        </authorList>
    </citation>
    <scope>GENE FAMILY ORGANIZATION</scope>
    <scope>NOMENCLATURE</scope>
</reference>
<dbReference type="EC" id="2.7.11.-"/>
<dbReference type="EMBL" id="AL050399">
    <property type="protein sequence ID" value="CAB82151.1"/>
    <property type="molecule type" value="Genomic_DNA"/>
</dbReference>
<dbReference type="EMBL" id="AL161532">
    <property type="protein sequence ID" value="CAB78189.1"/>
    <property type="molecule type" value="Genomic_DNA"/>
</dbReference>
<dbReference type="EMBL" id="CP002687">
    <property type="protein sequence ID" value="AEE83014.1"/>
    <property type="molecule type" value="Genomic_DNA"/>
</dbReference>
<dbReference type="PIR" id="T10566">
    <property type="entry name" value="T10566"/>
</dbReference>
<dbReference type="RefSeq" id="NP_192885.1">
    <property type="nucleotide sequence ID" value="NM_117217.1"/>
</dbReference>
<dbReference type="SMR" id="Q9LDT0"/>
<dbReference type="BioGRID" id="12050">
    <property type="interactions" value="10"/>
</dbReference>
<dbReference type="IntAct" id="Q9LDT0">
    <property type="interactions" value="10"/>
</dbReference>
<dbReference type="STRING" id="3702.Q9LDT0"/>
<dbReference type="GlyCosmos" id="Q9LDT0">
    <property type="glycosylation" value="5 sites, No reported glycans"/>
</dbReference>
<dbReference type="GlyGen" id="Q9LDT0">
    <property type="glycosylation" value="5 sites"/>
</dbReference>
<dbReference type="iPTMnet" id="Q9LDT0"/>
<dbReference type="PaxDb" id="3702-AT4G11460.1"/>
<dbReference type="ProteomicsDB" id="220418"/>
<dbReference type="EnsemblPlants" id="AT4G11460.1">
    <property type="protein sequence ID" value="AT4G11460.1"/>
    <property type="gene ID" value="AT4G11460"/>
</dbReference>
<dbReference type="GeneID" id="826751"/>
<dbReference type="Gramene" id="AT4G11460.1">
    <property type="protein sequence ID" value="AT4G11460.1"/>
    <property type="gene ID" value="AT4G11460"/>
</dbReference>
<dbReference type="KEGG" id="ath:AT4G11460"/>
<dbReference type="Araport" id="AT4G11460"/>
<dbReference type="TAIR" id="AT4G11460">
    <property type="gene designation" value="CRK30"/>
</dbReference>
<dbReference type="eggNOG" id="ENOG502QWDY">
    <property type="taxonomic scope" value="Eukaryota"/>
</dbReference>
<dbReference type="HOGENOM" id="CLU_000288_35_2_1"/>
<dbReference type="InParanoid" id="Q9LDT0"/>
<dbReference type="OMA" id="HPAYINV"/>
<dbReference type="PhylomeDB" id="Q9LDT0"/>
<dbReference type="PRO" id="PR:Q9LDT0"/>
<dbReference type="Proteomes" id="UP000006548">
    <property type="component" value="Chromosome 4"/>
</dbReference>
<dbReference type="ExpressionAtlas" id="Q9LDT0">
    <property type="expression patterns" value="baseline and differential"/>
</dbReference>
<dbReference type="GO" id="GO:0016020">
    <property type="term" value="C:membrane"/>
    <property type="evidence" value="ECO:0007669"/>
    <property type="project" value="UniProtKB-SubCell"/>
</dbReference>
<dbReference type="GO" id="GO:0005524">
    <property type="term" value="F:ATP binding"/>
    <property type="evidence" value="ECO:0007669"/>
    <property type="project" value="UniProtKB-KW"/>
</dbReference>
<dbReference type="GO" id="GO:0106310">
    <property type="term" value="F:protein serine kinase activity"/>
    <property type="evidence" value="ECO:0007669"/>
    <property type="project" value="RHEA"/>
</dbReference>
<dbReference type="GO" id="GO:0004674">
    <property type="term" value="F:protein serine/threonine kinase activity"/>
    <property type="evidence" value="ECO:0007669"/>
    <property type="project" value="UniProtKB-KW"/>
</dbReference>
<dbReference type="CDD" id="cd23509">
    <property type="entry name" value="Gnk2-like"/>
    <property type="match status" value="2"/>
</dbReference>
<dbReference type="CDD" id="cd14066">
    <property type="entry name" value="STKc_IRAK"/>
    <property type="match status" value="1"/>
</dbReference>
<dbReference type="FunFam" id="3.30.200.20:FF:000142">
    <property type="entry name" value="Cysteine-rich receptor-like protein kinase 10"/>
    <property type="match status" value="1"/>
</dbReference>
<dbReference type="FunFam" id="1.10.510.10:FF:000129">
    <property type="entry name" value="cysteine-rich receptor-like protein kinase 10"/>
    <property type="match status" value="1"/>
</dbReference>
<dbReference type="FunFam" id="3.30.430.20:FF:000007">
    <property type="entry name" value="Cysteine-rich receptor-like protein kinase 11"/>
    <property type="match status" value="1"/>
</dbReference>
<dbReference type="FunFam" id="3.30.430.20:FF:000003">
    <property type="entry name" value="Cysteine-rich RLK (RECEPTOR-like protein kinase) 10"/>
    <property type="match status" value="1"/>
</dbReference>
<dbReference type="Gene3D" id="3.30.430.20">
    <property type="entry name" value="Gnk2 domain, C-X8-C-X2-C motif"/>
    <property type="match status" value="2"/>
</dbReference>
<dbReference type="Gene3D" id="3.30.200.20">
    <property type="entry name" value="Phosphorylase Kinase, domain 1"/>
    <property type="match status" value="1"/>
</dbReference>
<dbReference type="Gene3D" id="1.10.510.10">
    <property type="entry name" value="Transferase(Phosphotransferase) domain 1"/>
    <property type="match status" value="1"/>
</dbReference>
<dbReference type="InterPro" id="IPR002902">
    <property type="entry name" value="GNK2"/>
</dbReference>
<dbReference type="InterPro" id="IPR038408">
    <property type="entry name" value="GNK2_sf"/>
</dbReference>
<dbReference type="InterPro" id="IPR011009">
    <property type="entry name" value="Kinase-like_dom_sf"/>
</dbReference>
<dbReference type="InterPro" id="IPR000719">
    <property type="entry name" value="Prot_kinase_dom"/>
</dbReference>
<dbReference type="InterPro" id="IPR017441">
    <property type="entry name" value="Protein_kinase_ATP_BS"/>
</dbReference>
<dbReference type="InterPro" id="IPR001245">
    <property type="entry name" value="Ser-Thr/Tyr_kinase_cat_dom"/>
</dbReference>
<dbReference type="InterPro" id="IPR008271">
    <property type="entry name" value="Ser/Thr_kinase_AS"/>
</dbReference>
<dbReference type="PANTHER" id="PTHR27002:SF1025">
    <property type="entry name" value="CYSTEINE-RICH RECEPTOR-LIKE PROTEIN KINASE 30-RELATED"/>
    <property type="match status" value="1"/>
</dbReference>
<dbReference type="PANTHER" id="PTHR27002">
    <property type="entry name" value="RECEPTOR-LIKE SERINE/THREONINE-PROTEIN KINASE SD1-8"/>
    <property type="match status" value="1"/>
</dbReference>
<dbReference type="Pfam" id="PF07714">
    <property type="entry name" value="PK_Tyr_Ser-Thr"/>
    <property type="match status" value="1"/>
</dbReference>
<dbReference type="Pfam" id="PF01657">
    <property type="entry name" value="Stress-antifung"/>
    <property type="match status" value="2"/>
</dbReference>
<dbReference type="SMART" id="SM00220">
    <property type="entry name" value="S_TKc"/>
    <property type="match status" value="1"/>
</dbReference>
<dbReference type="SUPFAM" id="SSF56112">
    <property type="entry name" value="Protein kinase-like (PK-like)"/>
    <property type="match status" value="1"/>
</dbReference>
<dbReference type="PROSITE" id="PS51473">
    <property type="entry name" value="GNK2"/>
    <property type="match status" value="2"/>
</dbReference>
<dbReference type="PROSITE" id="PS00107">
    <property type="entry name" value="PROTEIN_KINASE_ATP"/>
    <property type="match status" value="1"/>
</dbReference>
<dbReference type="PROSITE" id="PS50011">
    <property type="entry name" value="PROTEIN_KINASE_DOM"/>
    <property type="match status" value="1"/>
</dbReference>
<dbReference type="PROSITE" id="PS00108">
    <property type="entry name" value="PROTEIN_KINASE_ST"/>
    <property type="match status" value="1"/>
</dbReference>
<sequence>MRQNNLFSLIFWLVPVSLIIVVSAQLCSEKFGTFTPGGTFDKNRRIILSSLPSEVTAQDGFYNASIGTDPDQLYAMGMCIPGAKQKLCRDCIMDVTRQLIQTCPNQTAAIHWSGGGKTVCMARYYNQPSSRPLDLESVSIGYNVGNLSTNLTDFDRLWERLIAHMVTKASSASIKYLSFDNSRFYAADETNLTNSQMVYALMQCTPDVSPSNCNTCLKQSVDDYVGCCHGKQGGYVYRPSCIFRWDLYPFNGAFDLLTLAPPPSSQLQSPPPVTNKDEKTIHTGTIIGIVIVVAMVIIMALLALGVSVCRSRKKYQAFASETADDITTVGYLQFDIKDIEAATSNFLASNKIGQGGFGEVYKGTLSNGTEVAVKRLSRTSDQGELEFKNEVLLVAKLQHRNLVRLLGFALQGEEKILVFEFVPNKSLDYFLFGSTNPTKKGQLDWTRRYNIIGGITRGLLYLHQDSRLTIIHRDIKASNILLDADMNPKIADFGMARNFRDHQTEDSTGRVVGTFGYMPPEYVAHGQFSTKSDVYSFGVLILEIVSGRKNSSFYQMDGSVCNLVTYVWRLWNTDSSLELVDPAISGSYEKDEVTRCIHIGLLCVQENPVNRPALSTIFQMLTNSSITLNVPQPPGFFFRNRPESDTLRRGLEPDQYNNESVTCSIDNATITTLLGKTLASALCCITSTLFSKSMYRNTED</sequence>